<accession>A1UGY0</accession>
<dbReference type="EC" id="7.4.2.8" evidence="1"/>
<dbReference type="EMBL" id="CP000518">
    <property type="protein sequence ID" value="ABL92088.1"/>
    <property type="molecule type" value="Genomic_DNA"/>
</dbReference>
<dbReference type="SMR" id="A1UGY0"/>
<dbReference type="STRING" id="189918.Mkms_2894"/>
<dbReference type="KEGG" id="mkm:Mkms_2894"/>
<dbReference type="HOGENOM" id="CLU_005314_3_2_11"/>
<dbReference type="OrthoDB" id="9805579at2"/>
<dbReference type="GO" id="GO:0031522">
    <property type="term" value="C:cell envelope Sec protein transport complex"/>
    <property type="evidence" value="ECO:0007669"/>
    <property type="project" value="TreeGrafter"/>
</dbReference>
<dbReference type="GO" id="GO:0005829">
    <property type="term" value="C:cytosol"/>
    <property type="evidence" value="ECO:0007669"/>
    <property type="project" value="TreeGrafter"/>
</dbReference>
<dbReference type="GO" id="GO:0005886">
    <property type="term" value="C:plasma membrane"/>
    <property type="evidence" value="ECO:0007669"/>
    <property type="project" value="UniProtKB-SubCell"/>
</dbReference>
<dbReference type="GO" id="GO:0005524">
    <property type="term" value="F:ATP binding"/>
    <property type="evidence" value="ECO:0007669"/>
    <property type="project" value="UniProtKB-UniRule"/>
</dbReference>
<dbReference type="GO" id="GO:0008564">
    <property type="term" value="F:protein-exporting ATPase activity"/>
    <property type="evidence" value="ECO:0007669"/>
    <property type="project" value="UniProtKB-EC"/>
</dbReference>
<dbReference type="GO" id="GO:0065002">
    <property type="term" value="P:intracellular protein transmembrane transport"/>
    <property type="evidence" value="ECO:0007669"/>
    <property type="project" value="UniProtKB-UniRule"/>
</dbReference>
<dbReference type="GO" id="GO:0017038">
    <property type="term" value="P:protein import"/>
    <property type="evidence" value="ECO:0007669"/>
    <property type="project" value="InterPro"/>
</dbReference>
<dbReference type="GO" id="GO:0006605">
    <property type="term" value="P:protein targeting"/>
    <property type="evidence" value="ECO:0007669"/>
    <property type="project" value="UniProtKB-UniRule"/>
</dbReference>
<dbReference type="GO" id="GO:0043952">
    <property type="term" value="P:protein transport by the Sec complex"/>
    <property type="evidence" value="ECO:0007669"/>
    <property type="project" value="TreeGrafter"/>
</dbReference>
<dbReference type="CDD" id="cd17928">
    <property type="entry name" value="DEXDc_SecA"/>
    <property type="match status" value="1"/>
</dbReference>
<dbReference type="CDD" id="cd18803">
    <property type="entry name" value="SF2_C_secA"/>
    <property type="match status" value="1"/>
</dbReference>
<dbReference type="FunFam" id="3.40.50.300:FF:000429">
    <property type="entry name" value="Preprotein translocase subunit SecA"/>
    <property type="match status" value="1"/>
</dbReference>
<dbReference type="Gene3D" id="1.10.3060.10">
    <property type="entry name" value="Helical scaffold and wing domains of SecA"/>
    <property type="match status" value="1"/>
</dbReference>
<dbReference type="Gene3D" id="3.40.50.300">
    <property type="entry name" value="P-loop containing nucleotide triphosphate hydrolases"/>
    <property type="match status" value="3"/>
</dbReference>
<dbReference type="Gene3D" id="3.90.1440.10">
    <property type="entry name" value="SecA, preprotein cross-linking domain"/>
    <property type="match status" value="1"/>
</dbReference>
<dbReference type="HAMAP" id="MF_01382">
    <property type="entry name" value="SecA"/>
    <property type="match status" value="1"/>
</dbReference>
<dbReference type="InterPro" id="IPR014001">
    <property type="entry name" value="Helicase_ATP-bd"/>
</dbReference>
<dbReference type="InterPro" id="IPR001650">
    <property type="entry name" value="Helicase_C-like"/>
</dbReference>
<dbReference type="InterPro" id="IPR027417">
    <property type="entry name" value="P-loop_NTPase"/>
</dbReference>
<dbReference type="InterPro" id="IPR000185">
    <property type="entry name" value="SecA"/>
</dbReference>
<dbReference type="InterPro" id="IPR026389">
    <property type="entry name" value="SecA_Actinobact-type"/>
</dbReference>
<dbReference type="InterPro" id="IPR020937">
    <property type="entry name" value="SecA_CS"/>
</dbReference>
<dbReference type="InterPro" id="IPR011115">
    <property type="entry name" value="SecA_DEAD"/>
</dbReference>
<dbReference type="InterPro" id="IPR014018">
    <property type="entry name" value="SecA_motor_DEAD"/>
</dbReference>
<dbReference type="InterPro" id="IPR011130">
    <property type="entry name" value="SecA_preprotein_X-link_dom"/>
</dbReference>
<dbReference type="InterPro" id="IPR044722">
    <property type="entry name" value="SecA_SF2_C"/>
</dbReference>
<dbReference type="InterPro" id="IPR011116">
    <property type="entry name" value="SecA_Wing/Scaffold"/>
</dbReference>
<dbReference type="InterPro" id="IPR036266">
    <property type="entry name" value="SecA_Wing/Scaffold_sf"/>
</dbReference>
<dbReference type="InterPro" id="IPR036670">
    <property type="entry name" value="SecA_X-link_sf"/>
</dbReference>
<dbReference type="NCBIfam" id="TIGR04221">
    <property type="entry name" value="SecA2_Mycobac"/>
    <property type="match status" value="1"/>
</dbReference>
<dbReference type="PANTHER" id="PTHR30612:SF0">
    <property type="entry name" value="CHLOROPLAST PROTEIN-TRANSPORTING ATPASE"/>
    <property type="match status" value="1"/>
</dbReference>
<dbReference type="PANTHER" id="PTHR30612">
    <property type="entry name" value="SECA INNER MEMBRANE COMPONENT OF SEC PROTEIN SECRETION SYSTEM"/>
    <property type="match status" value="1"/>
</dbReference>
<dbReference type="Pfam" id="PF21090">
    <property type="entry name" value="P-loop_SecA"/>
    <property type="match status" value="2"/>
</dbReference>
<dbReference type="Pfam" id="PF07517">
    <property type="entry name" value="SecA_DEAD"/>
    <property type="match status" value="1"/>
</dbReference>
<dbReference type="Pfam" id="PF01043">
    <property type="entry name" value="SecA_PP_bind"/>
    <property type="match status" value="1"/>
</dbReference>
<dbReference type="Pfam" id="PF07516">
    <property type="entry name" value="SecA_SW"/>
    <property type="match status" value="1"/>
</dbReference>
<dbReference type="PRINTS" id="PR00906">
    <property type="entry name" value="SECA"/>
</dbReference>
<dbReference type="SMART" id="SM00957">
    <property type="entry name" value="SecA_DEAD"/>
    <property type="match status" value="1"/>
</dbReference>
<dbReference type="SMART" id="SM00958">
    <property type="entry name" value="SecA_PP_bind"/>
    <property type="match status" value="1"/>
</dbReference>
<dbReference type="SUPFAM" id="SSF81886">
    <property type="entry name" value="Helical scaffold and wing domains of SecA"/>
    <property type="match status" value="1"/>
</dbReference>
<dbReference type="SUPFAM" id="SSF52540">
    <property type="entry name" value="P-loop containing nucleoside triphosphate hydrolases"/>
    <property type="match status" value="2"/>
</dbReference>
<dbReference type="SUPFAM" id="SSF81767">
    <property type="entry name" value="Pre-protein crosslinking domain of SecA"/>
    <property type="match status" value="1"/>
</dbReference>
<dbReference type="PROSITE" id="PS01312">
    <property type="entry name" value="SECA"/>
    <property type="match status" value="1"/>
</dbReference>
<dbReference type="PROSITE" id="PS51196">
    <property type="entry name" value="SECA_MOTOR_DEAD"/>
    <property type="match status" value="1"/>
</dbReference>
<feature type="chain" id="PRO_0000318385" description="Protein translocase subunit SecA 2">
    <location>
        <begin position="1"/>
        <end position="774"/>
    </location>
</feature>
<feature type="binding site" evidence="1">
    <location>
        <position position="94"/>
    </location>
    <ligand>
        <name>ATP</name>
        <dbReference type="ChEBI" id="CHEBI:30616"/>
    </ligand>
</feature>
<feature type="binding site" evidence="1">
    <location>
        <begin position="112"/>
        <end position="116"/>
    </location>
    <ligand>
        <name>ATP</name>
        <dbReference type="ChEBI" id="CHEBI:30616"/>
    </ligand>
</feature>
<feature type="binding site" evidence="1">
    <location>
        <position position="501"/>
    </location>
    <ligand>
        <name>ATP</name>
        <dbReference type="ChEBI" id="CHEBI:30616"/>
    </ligand>
</feature>
<organism>
    <name type="scientific">Mycobacterium sp. (strain KMS)</name>
    <dbReference type="NCBI Taxonomy" id="189918"/>
    <lineage>
        <taxon>Bacteria</taxon>
        <taxon>Bacillati</taxon>
        <taxon>Actinomycetota</taxon>
        <taxon>Actinomycetes</taxon>
        <taxon>Mycobacteriales</taxon>
        <taxon>Mycobacteriaceae</taxon>
        <taxon>Mycobacterium</taxon>
    </lineage>
</organism>
<reference key="1">
    <citation type="submission" date="2006-12" db="EMBL/GenBank/DDBJ databases">
        <title>Complete sequence of chromosome of Mycobacterium sp. KMS.</title>
        <authorList>
            <consortium name="US DOE Joint Genome Institute"/>
            <person name="Copeland A."/>
            <person name="Lucas S."/>
            <person name="Lapidus A."/>
            <person name="Barry K."/>
            <person name="Detter J.C."/>
            <person name="Glavina del Rio T."/>
            <person name="Hammon N."/>
            <person name="Israni S."/>
            <person name="Dalin E."/>
            <person name="Tice H."/>
            <person name="Pitluck S."/>
            <person name="Kiss H."/>
            <person name="Brettin T."/>
            <person name="Bruce D."/>
            <person name="Han C."/>
            <person name="Tapia R."/>
            <person name="Gilna P."/>
            <person name="Schmutz J."/>
            <person name="Larimer F."/>
            <person name="Land M."/>
            <person name="Hauser L."/>
            <person name="Kyrpides N."/>
            <person name="Mikhailova N."/>
            <person name="Miller C.D."/>
            <person name="Richardson P."/>
        </authorList>
    </citation>
    <scope>NUCLEOTIDE SEQUENCE [LARGE SCALE GENOMIC DNA]</scope>
    <source>
        <strain>KMS</strain>
    </source>
</reference>
<keyword id="KW-0067">ATP-binding</keyword>
<keyword id="KW-1003">Cell membrane</keyword>
<keyword id="KW-0963">Cytoplasm</keyword>
<keyword id="KW-0472">Membrane</keyword>
<keyword id="KW-0547">Nucleotide-binding</keyword>
<keyword id="KW-0653">Protein transport</keyword>
<keyword id="KW-1278">Translocase</keyword>
<keyword id="KW-0811">Translocation</keyword>
<keyword id="KW-0813">Transport</keyword>
<name>SECA2_MYCSK</name>
<evidence type="ECO:0000255" key="1">
    <source>
        <dbReference type="HAMAP-Rule" id="MF_01382"/>
    </source>
</evidence>
<sequence>MPKTTTRTPGRLSGKFWKLLGAATEKNQGRSLAQVKASADYETKAADLDDEQLRKAAELLRLEDLSESADIPQFLAIAREAAERSTSLRPFDVQLLGALRMLAGDVVEMATGEGKTLSGAIAAAGYALGGRSVHVITINDYLARRDAEWMGPLIEALGLTVGWITAESTAEERRRAYTCDVTYASVNEIGFDVLRDQLVTDVADLVSPNPDVALIDEADSVLVDEALVPLVLAGTSHRETPRVELIRMVGELTPGRDFDTDTDSRNVHLTDEGARKLEAKLGGIDLYSEEHVGTTLTEVNVALHAHVLLQRDVHYIVRDDAVHLINSSRGRIAQLQRWPDGLQAAVEAKEGIATTETGEVLDTITVQALINRYPTVCGMTGTALAAGEQLRQFYKLGVSPIEPNKPNIREDESDRVYVTAAAKIDAIIEHIEEVHKTGQPVLVGTHDVAESEELHEKLVKRGVPAVVLNAKNDAEEARVIAEAGKLGAVTVSTQMAGRGTDIRLGGSDEGDHDEVAELGGLHVVGTGRHNTQRLDNQLRGRAGRQGDPGSSVFFSSWEDELVQAHLEPNKRPMQADENGRVLTDKAAALLDHAQRVAEGRLLDVHANTWRYNQLTAQQRAIIVERRDALLRTPTAREELAELSPKRYAELAEELSEERLERICRLIMLYHLDRGWCEHLAYLADIRESIHLRALGRQNPLDEFHRMAVDAFASLAADAIEAAQQTFETAPSFEDEPGVDLSKLARPTSTWTYMVHDNPLADDTMAALSLPGVFR</sequence>
<gene>
    <name evidence="1" type="primary">secA2</name>
    <name type="ordered locus">Mkms_2894</name>
</gene>
<proteinExistence type="inferred from homology"/>
<protein>
    <recommendedName>
        <fullName evidence="1">Protein translocase subunit SecA 2</fullName>
        <ecNumber evidence="1">7.4.2.8</ecNumber>
    </recommendedName>
</protein>
<comment type="function">
    <text evidence="1">Part of the Sec protein translocase complex. Interacts with the SecYEG preprotein conducting channel. Has a central role in coupling the hydrolysis of ATP to the transfer of proteins into and across the cell membrane, serving as an ATP-driven molecular motor driving the stepwise translocation of polypeptide chains across the membrane.</text>
</comment>
<comment type="catalytic activity">
    <reaction evidence="1">
        <text>ATP + H2O + cellular proteinSide 1 = ADP + phosphate + cellular proteinSide 2.</text>
        <dbReference type="EC" id="7.4.2.8"/>
    </reaction>
</comment>
<comment type="subunit">
    <text evidence="1">Monomer and homodimer. Part of the essential Sec protein translocation apparatus which comprises SecA, SecYEG and auxiliary proteins SecDF. Other proteins may also be involved.</text>
</comment>
<comment type="subcellular location">
    <subcellularLocation>
        <location evidence="1">Cell membrane</location>
        <topology evidence="1">Peripheral membrane protein</topology>
        <orientation evidence="1">Cytoplasmic side</orientation>
    </subcellularLocation>
    <subcellularLocation>
        <location evidence="1">Cytoplasm</location>
    </subcellularLocation>
    <text evidence="1">Distribution is 50-50.</text>
</comment>
<comment type="similarity">
    <text evidence="1">Belongs to the SecA family.</text>
</comment>